<feature type="chain" id="PRO_0000078114" description="Gamma-tubulin complex component 2">
    <location>
        <begin position="1"/>
        <end position="905"/>
    </location>
</feature>
<feature type="region of interest" description="Disordered" evidence="2">
    <location>
        <begin position="877"/>
        <end position="905"/>
    </location>
</feature>
<feature type="compositionally biased region" description="Pro residues" evidence="2">
    <location>
        <begin position="887"/>
        <end position="896"/>
    </location>
</feature>
<feature type="modified residue" description="Phosphotyrosine" evidence="1">
    <location>
        <position position="83"/>
    </location>
</feature>
<feature type="sequence conflict" description="In Ref. 3; AAH12519/AAH25582." evidence="3" ref="3">
    <original>T</original>
    <variation>I</variation>
    <location>
        <position position="727"/>
    </location>
</feature>
<sequence length="905" mass="103223">MSEFRIHHDVNELLSLLRIHGGDGAEVYIDLLQKNRTPYVTTTVSAHSAKVKIAEFSRTPEDFLKKYDELKSKNTRNLDPLVYLLSKLTEDKETLQFLQQNAKERAELAASAATSNTTSFSIPVAASKMSTQELEELRKQLGSVSTGSTLQQSLELTRKMLRDKQNKKNSGQPLPVFPAWVYERPTLAGDFLIGSGLSSDTVLPIGTLPLASQESAVVEDLLYVLVGVDGRYITAQPLAGRQNRTFLVDPNLDLSIRELVNRILPVAASYSTVTRFIEEKSSFEYGQVNHALAAAMRTLVKEYLILVTQLEQLHRQGLLSLQKLWFYIQPAMRTIDILASLATSVDKGECVGGSTLSLLHDRSFNYTGDSQAQELCLYLTKAASAPYFEILEKWIYRGIIHDPYSEFMVEEHELRKEKIQEDYNDKYWDQRYTVLPQQIPSFLQKVAGKILSTGKYLNVVRECGHDVTCPVAKEIIYTLKERAYVEQIEKAFNYASKVLLDFLMEEKELVAHLRSIKRYFLMDQGDFFVHFMDLTEEELRKPVEDIILTRLEALLELALRMSTANTDPFKDDLKIELMPHDLITQLLRVLAIETKQEKAMTHADPTELTLSGLEAFSFDYMVKWPLSLIINRKALTRYQMLFRHMFYCKHVERQLCSVWISNKTAKQHALHSAKWFAGAFTLRQRMLNFVQNIQYYMMFEVMEPTWHILEKNLKSASNIDDVLGHHTSFLDNCLKDCMLTNPELLKVFSKLMSVCVMFTNCMQKFTQSMKLDSELGRLTLDQGSVQGPPTETERIEDRPRKELTRKHLSEHVDAPQLASGFEATINNFDKNFSAHLLDLLARLSVYSTSDCEHGMASVISRLDFNGFYAERLERLSAERSQKAAPQVPVPRGPSAPAPRVAIPAQ</sequence>
<proteinExistence type="evidence at protein level"/>
<reference key="1">
    <citation type="journal article" date="2009" name="PLoS Biol.">
        <title>Lineage-specific biology revealed by a finished genome assembly of the mouse.</title>
        <authorList>
            <person name="Church D.M."/>
            <person name="Goodstadt L."/>
            <person name="Hillier L.W."/>
            <person name="Zody M.C."/>
            <person name="Goldstein S."/>
            <person name="She X."/>
            <person name="Bult C.J."/>
            <person name="Agarwala R."/>
            <person name="Cherry J.L."/>
            <person name="DiCuccio M."/>
            <person name="Hlavina W."/>
            <person name="Kapustin Y."/>
            <person name="Meric P."/>
            <person name="Maglott D."/>
            <person name="Birtle Z."/>
            <person name="Marques A.C."/>
            <person name="Graves T."/>
            <person name="Zhou S."/>
            <person name="Teague B."/>
            <person name="Potamousis K."/>
            <person name="Churas C."/>
            <person name="Place M."/>
            <person name="Herschleb J."/>
            <person name="Runnheim R."/>
            <person name="Forrest D."/>
            <person name="Amos-Landgraf J."/>
            <person name="Schwartz D.C."/>
            <person name="Cheng Z."/>
            <person name="Lindblad-Toh K."/>
            <person name="Eichler E.E."/>
            <person name="Ponting C.P."/>
        </authorList>
    </citation>
    <scope>NUCLEOTIDE SEQUENCE [LARGE SCALE GENOMIC DNA]</scope>
    <source>
        <strain>C57BL/6J</strain>
    </source>
</reference>
<reference key="2">
    <citation type="submission" date="2005-07" db="EMBL/GenBank/DDBJ databases">
        <authorList>
            <person name="Mural R.J."/>
            <person name="Adams M.D."/>
            <person name="Myers E.W."/>
            <person name="Smith H.O."/>
            <person name="Venter J.C."/>
        </authorList>
    </citation>
    <scope>NUCLEOTIDE SEQUENCE [LARGE SCALE GENOMIC DNA]</scope>
</reference>
<reference key="3">
    <citation type="journal article" date="2004" name="Genome Res.">
        <title>The status, quality, and expansion of the NIH full-length cDNA project: the Mammalian Gene Collection (MGC).</title>
        <authorList>
            <consortium name="The MGC Project Team"/>
        </authorList>
    </citation>
    <scope>NUCLEOTIDE SEQUENCE [LARGE SCALE MRNA]</scope>
    <source>
        <tissue>Mammary tumor</tissue>
    </source>
</reference>
<reference key="4">
    <citation type="journal article" date="2010" name="Cell">
        <title>A tissue-specific atlas of mouse protein phosphorylation and expression.</title>
        <authorList>
            <person name="Huttlin E.L."/>
            <person name="Jedrychowski M.P."/>
            <person name="Elias J.E."/>
            <person name="Goswami T."/>
            <person name="Rad R."/>
            <person name="Beausoleil S.A."/>
            <person name="Villen J."/>
            <person name="Haas W."/>
            <person name="Sowa M.E."/>
            <person name="Gygi S.P."/>
        </authorList>
    </citation>
    <scope>IDENTIFICATION BY MASS SPECTROMETRY [LARGE SCALE ANALYSIS]</scope>
    <source>
        <tissue>Brain</tissue>
        <tissue>Brown adipose tissue</tissue>
        <tissue>Kidney</tissue>
        <tissue>Lung</tissue>
        <tissue>Spleen</tissue>
        <tissue>Testis</tissue>
    </source>
</reference>
<dbReference type="EMBL" id="AC107822">
    <property type="status" value="NOT_ANNOTATED_CDS"/>
    <property type="molecule type" value="Genomic_DNA"/>
</dbReference>
<dbReference type="EMBL" id="AC109205">
    <property type="status" value="NOT_ANNOTATED_CDS"/>
    <property type="molecule type" value="Genomic_DNA"/>
</dbReference>
<dbReference type="EMBL" id="CH466531">
    <property type="protein sequence ID" value="EDL17885.1"/>
    <property type="molecule type" value="Genomic_DNA"/>
</dbReference>
<dbReference type="EMBL" id="BC012519">
    <property type="protein sequence ID" value="AAH12519.1"/>
    <property type="molecule type" value="mRNA"/>
</dbReference>
<dbReference type="EMBL" id="BC025582">
    <property type="protein sequence ID" value="AAH25582.1"/>
    <property type="molecule type" value="mRNA"/>
</dbReference>
<dbReference type="CCDS" id="CCDS21960.1"/>
<dbReference type="RefSeq" id="NP_001272936.1">
    <property type="nucleotide sequence ID" value="NM_001286007.1"/>
</dbReference>
<dbReference type="RefSeq" id="NP_598516.2">
    <property type="nucleotide sequence ID" value="NM_133755.2"/>
</dbReference>
<dbReference type="SMR" id="Q921G8"/>
<dbReference type="BioGRID" id="216597">
    <property type="interactions" value="30"/>
</dbReference>
<dbReference type="FunCoup" id="Q921G8">
    <property type="interactions" value="2562"/>
</dbReference>
<dbReference type="IntAct" id="Q921G8">
    <property type="interactions" value="6"/>
</dbReference>
<dbReference type="MINT" id="Q921G8"/>
<dbReference type="STRING" id="10090.ENSMUSP00000026547"/>
<dbReference type="iPTMnet" id="Q921G8"/>
<dbReference type="PhosphoSitePlus" id="Q921G8"/>
<dbReference type="PaxDb" id="10090-ENSMUSP00000026547"/>
<dbReference type="ProteomicsDB" id="271195"/>
<dbReference type="Pumba" id="Q921G8"/>
<dbReference type="Antibodypedia" id="46457">
    <property type="antibodies" value="177 antibodies from 30 providers"/>
</dbReference>
<dbReference type="DNASU" id="74237"/>
<dbReference type="Ensembl" id="ENSMUST00000026547.9">
    <property type="protein sequence ID" value="ENSMUSP00000026547.8"/>
    <property type="gene ID" value="ENSMUSG00000025474.10"/>
</dbReference>
<dbReference type="GeneID" id="74237"/>
<dbReference type="KEGG" id="mmu:74237"/>
<dbReference type="UCSC" id="uc009kgl.2">
    <property type="organism name" value="mouse"/>
</dbReference>
<dbReference type="AGR" id="MGI:1921487"/>
<dbReference type="CTD" id="10844"/>
<dbReference type="MGI" id="MGI:1921487">
    <property type="gene designation" value="Tubgcp2"/>
</dbReference>
<dbReference type="VEuPathDB" id="HostDB:ENSMUSG00000025474"/>
<dbReference type="eggNOG" id="KOG2001">
    <property type="taxonomic scope" value="Eukaryota"/>
</dbReference>
<dbReference type="GeneTree" id="ENSGT00940000156697"/>
<dbReference type="HOGENOM" id="CLU_007738_1_0_1"/>
<dbReference type="InParanoid" id="Q921G8"/>
<dbReference type="OMA" id="QNMSGDP"/>
<dbReference type="OrthoDB" id="2192946at2759"/>
<dbReference type="PhylomeDB" id="Q921G8"/>
<dbReference type="TreeFam" id="TF324047"/>
<dbReference type="Reactome" id="R-MMU-380270">
    <property type="pathway name" value="Recruitment of mitotic centrosome proteins and complexes"/>
</dbReference>
<dbReference type="Reactome" id="R-MMU-380320">
    <property type="pathway name" value="Recruitment of NuMA to mitotic centrosomes"/>
</dbReference>
<dbReference type="BioGRID-ORCS" id="74237">
    <property type="hits" value="20 hits in 77 CRISPR screens"/>
</dbReference>
<dbReference type="CD-CODE" id="01CA17F3">
    <property type="entry name" value="Centrosome"/>
</dbReference>
<dbReference type="ChiTaRS" id="Tubgcp2">
    <property type="organism name" value="mouse"/>
</dbReference>
<dbReference type="PRO" id="PR:Q921G8"/>
<dbReference type="Proteomes" id="UP000000589">
    <property type="component" value="Chromosome 7"/>
</dbReference>
<dbReference type="RNAct" id="Q921G8">
    <property type="molecule type" value="protein"/>
</dbReference>
<dbReference type="Bgee" id="ENSMUSG00000025474">
    <property type="expression patterns" value="Expressed in spermatocyte and 254 other cell types or tissues"/>
</dbReference>
<dbReference type="ExpressionAtlas" id="Q921G8">
    <property type="expression patterns" value="baseline and differential"/>
</dbReference>
<dbReference type="GO" id="GO:0005813">
    <property type="term" value="C:centrosome"/>
    <property type="evidence" value="ECO:0007669"/>
    <property type="project" value="UniProtKB-SubCell"/>
</dbReference>
<dbReference type="GO" id="GO:0036064">
    <property type="term" value="C:ciliary basal body"/>
    <property type="evidence" value="ECO:0007669"/>
    <property type="project" value="Ensembl"/>
</dbReference>
<dbReference type="GO" id="GO:0005737">
    <property type="term" value="C:cytoplasm"/>
    <property type="evidence" value="ECO:0007669"/>
    <property type="project" value="UniProtKB-KW"/>
</dbReference>
<dbReference type="GO" id="GO:0005874">
    <property type="term" value="C:microtubule"/>
    <property type="evidence" value="ECO:0007669"/>
    <property type="project" value="UniProtKB-KW"/>
</dbReference>
<dbReference type="GO" id="GO:0005815">
    <property type="term" value="C:microtubule organizing center"/>
    <property type="evidence" value="ECO:0000250"/>
    <property type="project" value="UniProtKB"/>
</dbReference>
<dbReference type="GO" id="GO:0005654">
    <property type="term" value="C:nucleoplasm"/>
    <property type="evidence" value="ECO:0007669"/>
    <property type="project" value="Ensembl"/>
</dbReference>
<dbReference type="GO" id="GO:0000922">
    <property type="term" value="C:spindle pole"/>
    <property type="evidence" value="ECO:0007669"/>
    <property type="project" value="InterPro"/>
</dbReference>
<dbReference type="GO" id="GO:0043015">
    <property type="term" value="F:gamma-tubulin binding"/>
    <property type="evidence" value="ECO:0007669"/>
    <property type="project" value="InterPro"/>
</dbReference>
<dbReference type="GO" id="GO:0007420">
    <property type="term" value="P:brain development"/>
    <property type="evidence" value="ECO:0000250"/>
    <property type="project" value="UniProtKB"/>
</dbReference>
<dbReference type="GO" id="GO:0007020">
    <property type="term" value="P:microtubule nucleation"/>
    <property type="evidence" value="ECO:0007669"/>
    <property type="project" value="InterPro"/>
</dbReference>
<dbReference type="GO" id="GO:0001764">
    <property type="term" value="P:neuron migration"/>
    <property type="evidence" value="ECO:0000250"/>
    <property type="project" value="UniProtKB"/>
</dbReference>
<dbReference type="FunFam" id="1.20.120.1900:FF:000002">
    <property type="entry name" value="Gamma-tubulin complex component"/>
    <property type="match status" value="1"/>
</dbReference>
<dbReference type="Gene3D" id="1.20.120.1900">
    <property type="entry name" value="Gamma-tubulin complex, C-terminal domain"/>
    <property type="match status" value="1"/>
</dbReference>
<dbReference type="InterPro" id="IPR007259">
    <property type="entry name" value="GCP"/>
</dbReference>
<dbReference type="InterPro" id="IPR040457">
    <property type="entry name" value="GCP_C"/>
</dbReference>
<dbReference type="InterPro" id="IPR042241">
    <property type="entry name" value="GCP_C_sf"/>
</dbReference>
<dbReference type="InterPro" id="IPR041470">
    <property type="entry name" value="GCP_N"/>
</dbReference>
<dbReference type="PANTHER" id="PTHR19302">
    <property type="entry name" value="GAMMA TUBULIN COMPLEX PROTEIN"/>
    <property type="match status" value="1"/>
</dbReference>
<dbReference type="PANTHER" id="PTHR19302:SF13">
    <property type="entry name" value="GAMMA-TUBULIN COMPLEX COMPONENT 2"/>
    <property type="match status" value="1"/>
</dbReference>
<dbReference type="Pfam" id="PF04130">
    <property type="entry name" value="GCP_C_terminal"/>
    <property type="match status" value="1"/>
</dbReference>
<dbReference type="Pfam" id="PF17681">
    <property type="entry name" value="GCP_N_terminal"/>
    <property type="match status" value="1"/>
</dbReference>
<accession>Q921G8</accession>
<accession>G5E859</accession>
<keyword id="KW-0963">Cytoplasm</keyword>
<keyword id="KW-0206">Cytoskeleton</keyword>
<keyword id="KW-0493">Microtubule</keyword>
<keyword id="KW-0597">Phosphoprotein</keyword>
<keyword id="KW-1185">Reference proteome</keyword>
<gene>
    <name type="primary">Tubgcp2</name>
    <name type="synonym">Gcp2</name>
</gene>
<name>GCP2_MOUSE</name>
<evidence type="ECO:0000250" key="1">
    <source>
        <dbReference type="UniProtKB" id="Q9BSJ2"/>
    </source>
</evidence>
<evidence type="ECO:0000256" key="2">
    <source>
        <dbReference type="SAM" id="MobiDB-lite"/>
    </source>
</evidence>
<evidence type="ECO:0000305" key="3"/>
<protein>
    <recommendedName>
        <fullName>Gamma-tubulin complex component 2</fullName>
        <shortName>GCP-2</shortName>
    </recommendedName>
</protein>
<comment type="function">
    <text evidence="1">Component of the gamma-tubulin ring complex (gTuRC) which mediates microtubule nucleation (By similarity). The gTuRC regulates the minus-end nucleation of alpha-beta tubulin heterodimers that grow into microtubule protafilaments, a critical step in centrosome duplication and spindle formation (By similarity). Plays a role in neuronal migration (By similarity).</text>
</comment>
<comment type="subunit">
    <text evidence="1">Component of the gamma-tubulin ring complex (gTuRC) consisting of TUBGCP2, TUBGCP3, TUBGCP4, TUBGCP5 and TUBGCP6 and gamma-tubulin TUBG1 or TUBG2 (By similarity). TUBGCP2, TUBGCP3, TUBGCP4, TUBGCP5 and TUBGCP6 assemble in a 5:5:2:1:1 stoichiometry; each is associated with a gamma-tubulin, thereby arranging 14 gamma-tubulins in a helical manner (By similarity). Gamma-tubulin at the first position is blocked by TUBGCP3 at the last position, allowing 13 protafilaments to grow into a microtubule (By similarity). The gTuRC (via TUBGCP3 and TUBGCP6) interacts with ACTB and MZT1; the interactions form a luminal bridge that stabilizes the initial structure during complex assembly (By similarity). The gTuRC (via TUBGCP2) interacts with MZT2A/MZT2B and CDK5RAP2 (via CM1 motif); the interactions play a role in gTuRC activation (By similarity). Interacts with ATF5; the ATF5:PCNT:polyglutamylated tubulin (PGT) tripartite unites the mother centriole and the pericentriolar material (PCM) in the centrosome (By similarity).</text>
</comment>
<comment type="subcellular location">
    <subcellularLocation>
        <location evidence="1">Cytoplasm</location>
        <location evidence="1">Cytoskeleton</location>
        <location evidence="1">Microtubule organizing center</location>
        <location evidence="1">Centrosome</location>
    </subcellularLocation>
</comment>
<comment type="similarity">
    <text evidence="3">Belongs to the TUBGCP family.</text>
</comment>
<organism>
    <name type="scientific">Mus musculus</name>
    <name type="common">Mouse</name>
    <dbReference type="NCBI Taxonomy" id="10090"/>
    <lineage>
        <taxon>Eukaryota</taxon>
        <taxon>Metazoa</taxon>
        <taxon>Chordata</taxon>
        <taxon>Craniata</taxon>
        <taxon>Vertebrata</taxon>
        <taxon>Euteleostomi</taxon>
        <taxon>Mammalia</taxon>
        <taxon>Eutheria</taxon>
        <taxon>Euarchontoglires</taxon>
        <taxon>Glires</taxon>
        <taxon>Rodentia</taxon>
        <taxon>Myomorpha</taxon>
        <taxon>Muroidea</taxon>
        <taxon>Muridae</taxon>
        <taxon>Murinae</taxon>
        <taxon>Mus</taxon>
        <taxon>Mus</taxon>
    </lineage>
</organism>